<organism>
    <name type="scientific">Bacillus licheniformis (strain ATCC 14580 / DSM 13 / JCM 2505 / CCUG 7422 / NBRC 12200 / NCIMB 9375 / NCTC 10341 / NRRL NRS-1264 / Gibson 46)</name>
    <dbReference type="NCBI Taxonomy" id="279010"/>
    <lineage>
        <taxon>Bacteria</taxon>
        <taxon>Bacillati</taxon>
        <taxon>Bacillota</taxon>
        <taxon>Bacilli</taxon>
        <taxon>Bacillales</taxon>
        <taxon>Bacillaceae</taxon>
        <taxon>Bacillus</taxon>
    </lineage>
</organism>
<protein>
    <recommendedName>
        <fullName evidence="1">Translation initiation factor IF-1</fullName>
    </recommendedName>
</protein>
<proteinExistence type="inferred from homology"/>
<sequence length="72" mass="8200">MAKDDVIEVEGTVVETLPNAMFKVELENGHTVLAHVSGKIRMHFIRILPGDKVTVELSPYDLTRGRITYRYK</sequence>
<comment type="function">
    <text evidence="1">One of the essential components for the initiation of protein synthesis. Stabilizes the binding of IF-2 and IF-3 on the 30S subunit to which N-formylmethionyl-tRNA(fMet) subsequently binds. Helps modulate mRNA selection, yielding the 30S pre-initiation complex (PIC). Upon addition of the 50S ribosomal subunit IF-1, IF-2 and IF-3 are released leaving the mature 70S translation initiation complex.</text>
</comment>
<comment type="subunit">
    <text evidence="1">Component of the 30S ribosomal translation pre-initiation complex which assembles on the 30S ribosome in the order IF-2 and IF-3, IF-1 and N-formylmethionyl-tRNA(fMet); mRNA recruitment can occur at any time during PIC assembly.</text>
</comment>
<comment type="subcellular location">
    <subcellularLocation>
        <location evidence="1">Cytoplasm</location>
    </subcellularLocation>
</comment>
<comment type="similarity">
    <text evidence="1">Belongs to the IF-1 family.</text>
</comment>
<evidence type="ECO:0000255" key="1">
    <source>
        <dbReference type="HAMAP-Rule" id="MF_00075"/>
    </source>
</evidence>
<name>IF1_BACLD</name>
<accession>Q65P83</accession>
<accession>Q62ZM2</accession>
<gene>
    <name evidence="1" type="primary">infA</name>
    <name type="ordered locus">BLi00157</name>
    <name type="ordered locus">BL01028</name>
</gene>
<reference key="1">
    <citation type="journal article" date="2004" name="J. Mol. Microbiol. Biotechnol.">
        <title>The complete genome sequence of Bacillus licheniformis DSM13, an organism with great industrial potential.</title>
        <authorList>
            <person name="Veith B."/>
            <person name="Herzberg C."/>
            <person name="Steckel S."/>
            <person name="Feesche J."/>
            <person name="Maurer K.H."/>
            <person name="Ehrenreich P."/>
            <person name="Baeumer S."/>
            <person name="Henne A."/>
            <person name="Liesegang H."/>
            <person name="Merkl R."/>
            <person name="Ehrenreich A."/>
            <person name="Gottschalk G."/>
        </authorList>
    </citation>
    <scope>NUCLEOTIDE SEQUENCE [LARGE SCALE GENOMIC DNA]</scope>
    <source>
        <strain>ATCC 14580 / DSM 13 / JCM 2505 / CCUG 7422 / NBRC 12200 / NCIMB 9375 / NCTC 10341 / NRRL NRS-1264 / Gibson 46</strain>
    </source>
</reference>
<reference key="2">
    <citation type="journal article" date="2004" name="Genome Biol.">
        <title>Complete genome sequence of the industrial bacterium Bacillus licheniformis and comparisons with closely related Bacillus species.</title>
        <authorList>
            <person name="Rey M.W."/>
            <person name="Ramaiya P."/>
            <person name="Nelson B.A."/>
            <person name="Brody-Karpin S.D."/>
            <person name="Zaretsky E.J."/>
            <person name="Tang M."/>
            <person name="Lopez de Leon A."/>
            <person name="Xiang H."/>
            <person name="Gusti V."/>
            <person name="Clausen I.G."/>
            <person name="Olsen P.B."/>
            <person name="Rasmussen M.D."/>
            <person name="Andersen J.T."/>
            <person name="Joergensen P.L."/>
            <person name="Larsen T.S."/>
            <person name="Sorokin A."/>
            <person name="Bolotin A."/>
            <person name="Lapidus A."/>
            <person name="Galleron N."/>
            <person name="Ehrlich S.D."/>
            <person name="Berka R.M."/>
        </authorList>
    </citation>
    <scope>NUCLEOTIDE SEQUENCE [LARGE SCALE GENOMIC DNA]</scope>
    <source>
        <strain>ATCC 14580 / DSM 13 / JCM 2505 / CCUG 7422 / NBRC 12200 / NCIMB 9375 / NCTC 10341 / NRRL NRS-1264 / Gibson 46</strain>
    </source>
</reference>
<dbReference type="EMBL" id="AE017333">
    <property type="protein sequence ID" value="AAU39131.1"/>
    <property type="molecule type" value="Genomic_DNA"/>
</dbReference>
<dbReference type="EMBL" id="CP000002">
    <property type="protein sequence ID" value="AAU21786.1"/>
    <property type="molecule type" value="Genomic_DNA"/>
</dbReference>
<dbReference type="RefSeq" id="WP_003178377.1">
    <property type="nucleotide sequence ID" value="NC_006322.1"/>
</dbReference>
<dbReference type="SMR" id="Q65P83"/>
<dbReference type="STRING" id="279010.BL01028"/>
<dbReference type="GeneID" id="92858879"/>
<dbReference type="KEGG" id="bld:BLi00157"/>
<dbReference type="KEGG" id="bli:BL01028"/>
<dbReference type="eggNOG" id="COG0361">
    <property type="taxonomic scope" value="Bacteria"/>
</dbReference>
<dbReference type="HOGENOM" id="CLU_151267_1_0_9"/>
<dbReference type="Proteomes" id="UP000000606">
    <property type="component" value="Chromosome"/>
</dbReference>
<dbReference type="GO" id="GO:0005829">
    <property type="term" value="C:cytosol"/>
    <property type="evidence" value="ECO:0007669"/>
    <property type="project" value="TreeGrafter"/>
</dbReference>
<dbReference type="GO" id="GO:0043022">
    <property type="term" value="F:ribosome binding"/>
    <property type="evidence" value="ECO:0007669"/>
    <property type="project" value="UniProtKB-UniRule"/>
</dbReference>
<dbReference type="GO" id="GO:0019843">
    <property type="term" value="F:rRNA binding"/>
    <property type="evidence" value="ECO:0007669"/>
    <property type="project" value="UniProtKB-UniRule"/>
</dbReference>
<dbReference type="GO" id="GO:0003743">
    <property type="term" value="F:translation initiation factor activity"/>
    <property type="evidence" value="ECO:0007669"/>
    <property type="project" value="UniProtKB-UniRule"/>
</dbReference>
<dbReference type="CDD" id="cd04451">
    <property type="entry name" value="S1_IF1"/>
    <property type="match status" value="1"/>
</dbReference>
<dbReference type="FunFam" id="2.40.50.140:FF:000002">
    <property type="entry name" value="Translation initiation factor IF-1"/>
    <property type="match status" value="1"/>
</dbReference>
<dbReference type="Gene3D" id="2.40.50.140">
    <property type="entry name" value="Nucleic acid-binding proteins"/>
    <property type="match status" value="1"/>
</dbReference>
<dbReference type="HAMAP" id="MF_00075">
    <property type="entry name" value="IF_1"/>
    <property type="match status" value="1"/>
</dbReference>
<dbReference type="InterPro" id="IPR012340">
    <property type="entry name" value="NA-bd_OB-fold"/>
</dbReference>
<dbReference type="InterPro" id="IPR006196">
    <property type="entry name" value="RNA-binding_domain_S1_IF1"/>
</dbReference>
<dbReference type="InterPro" id="IPR003029">
    <property type="entry name" value="S1_domain"/>
</dbReference>
<dbReference type="InterPro" id="IPR004368">
    <property type="entry name" value="TIF_IF1"/>
</dbReference>
<dbReference type="NCBIfam" id="TIGR00008">
    <property type="entry name" value="infA"/>
    <property type="match status" value="1"/>
</dbReference>
<dbReference type="PANTHER" id="PTHR33370">
    <property type="entry name" value="TRANSLATION INITIATION FACTOR IF-1, CHLOROPLASTIC"/>
    <property type="match status" value="1"/>
</dbReference>
<dbReference type="PANTHER" id="PTHR33370:SF1">
    <property type="entry name" value="TRANSLATION INITIATION FACTOR IF-1, CHLOROPLASTIC"/>
    <property type="match status" value="1"/>
</dbReference>
<dbReference type="Pfam" id="PF01176">
    <property type="entry name" value="eIF-1a"/>
    <property type="match status" value="1"/>
</dbReference>
<dbReference type="SMART" id="SM00316">
    <property type="entry name" value="S1"/>
    <property type="match status" value="1"/>
</dbReference>
<dbReference type="SUPFAM" id="SSF50249">
    <property type="entry name" value="Nucleic acid-binding proteins"/>
    <property type="match status" value="1"/>
</dbReference>
<dbReference type="PROSITE" id="PS50832">
    <property type="entry name" value="S1_IF1_TYPE"/>
    <property type="match status" value="1"/>
</dbReference>
<keyword id="KW-0963">Cytoplasm</keyword>
<keyword id="KW-0396">Initiation factor</keyword>
<keyword id="KW-0597">Phosphoprotein</keyword>
<keyword id="KW-0648">Protein biosynthesis</keyword>
<keyword id="KW-1185">Reference proteome</keyword>
<keyword id="KW-0694">RNA-binding</keyword>
<keyword id="KW-0699">rRNA-binding</keyword>
<feature type="chain" id="PRO_0000095736" description="Translation initiation factor IF-1">
    <location>
        <begin position="1"/>
        <end position="72"/>
    </location>
</feature>
<feature type="domain" description="S1-like" evidence="1">
    <location>
        <begin position="1"/>
        <end position="72"/>
    </location>
</feature>
<feature type="modified residue" description="Phosphotyrosine" evidence="1">
    <location>
        <position position="60"/>
    </location>
</feature>